<reference key="1">
    <citation type="journal article" date="2006" name="J. Biol. Chem.">
        <title>Molecular identification and characterization of a family of kinases with homology to Ca2+/calmodulin-dependent protein kinases I/IV.</title>
        <authorList>
            <person name="Ohmae S."/>
            <person name="Takemoto-Kimura S."/>
            <person name="Okamura M."/>
            <person name="Adachi-Morishima A."/>
            <person name="Nonaka M."/>
            <person name="Fuse T."/>
            <person name="Kida S."/>
            <person name="Tanji M."/>
            <person name="Furuyashiki T."/>
            <person name="Arakawa Y."/>
            <person name="Narumiya S."/>
            <person name="Okuno H."/>
            <person name="Bito H."/>
        </authorList>
    </citation>
    <scope>NUCLEOTIDE SEQUENCE [MRNA]</scope>
    <scope>TISSUE SPECIFICITY</scope>
    <scope>SUBCELLULAR LOCATION</scope>
</reference>
<reference key="2">
    <citation type="journal article" date="2005" name="Science">
        <title>The transcriptional landscape of the mammalian genome.</title>
        <authorList>
            <person name="Carninci P."/>
            <person name="Kasukawa T."/>
            <person name="Katayama S."/>
            <person name="Gough J."/>
            <person name="Frith M.C."/>
            <person name="Maeda N."/>
            <person name="Oyama R."/>
            <person name="Ravasi T."/>
            <person name="Lenhard B."/>
            <person name="Wells C."/>
            <person name="Kodzius R."/>
            <person name="Shimokawa K."/>
            <person name="Bajic V.B."/>
            <person name="Brenner S.E."/>
            <person name="Batalov S."/>
            <person name="Forrest A.R."/>
            <person name="Zavolan M."/>
            <person name="Davis M.J."/>
            <person name="Wilming L.G."/>
            <person name="Aidinis V."/>
            <person name="Allen J.E."/>
            <person name="Ambesi-Impiombato A."/>
            <person name="Apweiler R."/>
            <person name="Aturaliya R.N."/>
            <person name="Bailey T.L."/>
            <person name="Bansal M."/>
            <person name="Baxter L."/>
            <person name="Beisel K.W."/>
            <person name="Bersano T."/>
            <person name="Bono H."/>
            <person name="Chalk A.M."/>
            <person name="Chiu K.P."/>
            <person name="Choudhary V."/>
            <person name="Christoffels A."/>
            <person name="Clutterbuck D.R."/>
            <person name="Crowe M.L."/>
            <person name="Dalla E."/>
            <person name="Dalrymple B.P."/>
            <person name="de Bono B."/>
            <person name="Della Gatta G."/>
            <person name="di Bernardo D."/>
            <person name="Down T."/>
            <person name="Engstrom P."/>
            <person name="Fagiolini M."/>
            <person name="Faulkner G."/>
            <person name="Fletcher C.F."/>
            <person name="Fukushima T."/>
            <person name="Furuno M."/>
            <person name="Futaki S."/>
            <person name="Gariboldi M."/>
            <person name="Georgii-Hemming P."/>
            <person name="Gingeras T.R."/>
            <person name="Gojobori T."/>
            <person name="Green R.E."/>
            <person name="Gustincich S."/>
            <person name="Harbers M."/>
            <person name="Hayashi Y."/>
            <person name="Hensch T.K."/>
            <person name="Hirokawa N."/>
            <person name="Hill D."/>
            <person name="Huminiecki L."/>
            <person name="Iacono M."/>
            <person name="Ikeo K."/>
            <person name="Iwama A."/>
            <person name="Ishikawa T."/>
            <person name="Jakt M."/>
            <person name="Kanapin A."/>
            <person name="Katoh M."/>
            <person name="Kawasawa Y."/>
            <person name="Kelso J."/>
            <person name="Kitamura H."/>
            <person name="Kitano H."/>
            <person name="Kollias G."/>
            <person name="Krishnan S.P."/>
            <person name="Kruger A."/>
            <person name="Kummerfeld S.K."/>
            <person name="Kurochkin I.V."/>
            <person name="Lareau L.F."/>
            <person name="Lazarevic D."/>
            <person name="Lipovich L."/>
            <person name="Liu J."/>
            <person name="Liuni S."/>
            <person name="McWilliam S."/>
            <person name="Madan Babu M."/>
            <person name="Madera M."/>
            <person name="Marchionni L."/>
            <person name="Matsuda H."/>
            <person name="Matsuzawa S."/>
            <person name="Miki H."/>
            <person name="Mignone F."/>
            <person name="Miyake S."/>
            <person name="Morris K."/>
            <person name="Mottagui-Tabar S."/>
            <person name="Mulder N."/>
            <person name="Nakano N."/>
            <person name="Nakauchi H."/>
            <person name="Ng P."/>
            <person name="Nilsson R."/>
            <person name="Nishiguchi S."/>
            <person name="Nishikawa S."/>
            <person name="Nori F."/>
            <person name="Ohara O."/>
            <person name="Okazaki Y."/>
            <person name="Orlando V."/>
            <person name="Pang K.C."/>
            <person name="Pavan W.J."/>
            <person name="Pavesi G."/>
            <person name="Pesole G."/>
            <person name="Petrovsky N."/>
            <person name="Piazza S."/>
            <person name="Reed J."/>
            <person name="Reid J.F."/>
            <person name="Ring B.Z."/>
            <person name="Ringwald M."/>
            <person name="Rost B."/>
            <person name="Ruan Y."/>
            <person name="Salzberg S.L."/>
            <person name="Sandelin A."/>
            <person name="Schneider C."/>
            <person name="Schoenbach C."/>
            <person name="Sekiguchi K."/>
            <person name="Semple C.A."/>
            <person name="Seno S."/>
            <person name="Sessa L."/>
            <person name="Sheng Y."/>
            <person name="Shibata Y."/>
            <person name="Shimada H."/>
            <person name="Shimada K."/>
            <person name="Silva D."/>
            <person name="Sinclair B."/>
            <person name="Sperling S."/>
            <person name="Stupka E."/>
            <person name="Sugiura K."/>
            <person name="Sultana R."/>
            <person name="Takenaka Y."/>
            <person name="Taki K."/>
            <person name="Tammoja K."/>
            <person name="Tan S.L."/>
            <person name="Tang S."/>
            <person name="Taylor M.S."/>
            <person name="Tegner J."/>
            <person name="Teichmann S.A."/>
            <person name="Ueda H.R."/>
            <person name="van Nimwegen E."/>
            <person name="Verardo R."/>
            <person name="Wei C.L."/>
            <person name="Yagi K."/>
            <person name="Yamanishi H."/>
            <person name="Zabarovsky E."/>
            <person name="Zhu S."/>
            <person name="Zimmer A."/>
            <person name="Hide W."/>
            <person name="Bult C."/>
            <person name="Grimmond S.M."/>
            <person name="Teasdale R.D."/>
            <person name="Liu E.T."/>
            <person name="Brusic V."/>
            <person name="Quackenbush J."/>
            <person name="Wahlestedt C."/>
            <person name="Mattick J.S."/>
            <person name="Hume D.A."/>
            <person name="Kai C."/>
            <person name="Sasaki D."/>
            <person name="Tomaru Y."/>
            <person name="Fukuda S."/>
            <person name="Kanamori-Katayama M."/>
            <person name="Suzuki M."/>
            <person name="Aoki J."/>
            <person name="Arakawa T."/>
            <person name="Iida J."/>
            <person name="Imamura K."/>
            <person name="Itoh M."/>
            <person name="Kato T."/>
            <person name="Kawaji H."/>
            <person name="Kawagashira N."/>
            <person name="Kawashima T."/>
            <person name="Kojima M."/>
            <person name="Kondo S."/>
            <person name="Konno H."/>
            <person name="Nakano K."/>
            <person name="Ninomiya N."/>
            <person name="Nishio T."/>
            <person name="Okada M."/>
            <person name="Plessy C."/>
            <person name="Shibata K."/>
            <person name="Shiraki T."/>
            <person name="Suzuki S."/>
            <person name="Tagami M."/>
            <person name="Waki K."/>
            <person name="Watahiki A."/>
            <person name="Okamura-Oho Y."/>
            <person name="Suzuki H."/>
            <person name="Kawai J."/>
            <person name="Hayashizaki Y."/>
        </authorList>
    </citation>
    <scope>NUCLEOTIDE SEQUENCE [LARGE SCALE MRNA]</scope>
    <source>
        <strain>C57BL/6J</strain>
        <tissue>Liver</tissue>
    </source>
</reference>
<reference key="3">
    <citation type="journal article" date="2004" name="Genome Res.">
        <title>The status, quality, and expansion of the NIH full-length cDNA project: the Mammalian Gene Collection (MGC).</title>
        <authorList>
            <consortium name="The MGC Project Team"/>
        </authorList>
    </citation>
    <scope>NUCLEOTIDE SEQUENCE [LARGE SCALE MRNA] OF 51-790</scope>
    <source>
        <strain>C57BL/6J</strain>
        <tissue>Brain</tissue>
    </source>
</reference>
<dbReference type="EC" id="2.7.11.1"/>
<dbReference type="EMBL" id="DQ286388">
    <property type="protein sequence ID" value="ABB89470.1"/>
    <property type="molecule type" value="mRNA"/>
</dbReference>
<dbReference type="EMBL" id="AK050312">
    <property type="protein sequence ID" value="BAC34182.1"/>
    <property type="status" value="ALT_FRAME"/>
    <property type="molecule type" value="mRNA"/>
</dbReference>
<dbReference type="EMBL" id="BC056929">
    <property type="protein sequence ID" value="AAH56929.1"/>
    <property type="status" value="ALT_INIT"/>
    <property type="molecule type" value="mRNA"/>
</dbReference>
<dbReference type="CCDS" id="CCDS23585.2"/>
<dbReference type="RefSeq" id="NP_766516.2">
    <property type="nucleotide sequence ID" value="NM_172928.5"/>
</dbReference>
<dbReference type="SMR" id="Q8BWQ5"/>
<dbReference type="FunCoup" id="Q8BWQ5">
    <property type="interactions" value="995"/>
</dbReference>
<dbReference type="IntAct" id="Q8BWQ5">
    <property type="interactions" value="1"/>
</dbReference>
<dbReference type="STRING" id="10090.ENSMUSP00000107510"/>
<dbReference type="GlyGen" id="Q8BWQ5">
    <property type="glycosylation" value="1 site"/>
</dbReference>
<dbReference type="PhosphoSitePlus" id="Q8BWQ5"/>
<dbReference type="PaxDb" id="10090-ENSMUSP00000107510"/>
<dbReference type="ProteomicsDB" id="279500"/>
<dbReference type="Antibodypedia" id="28151">
    <property type="antibodies" value="105 antibodies from 30 providers"/>
</dbReference>
<dbReference type="DNASU" id="245038"/>
<dbReference type="Ensembl" id="ENSMUST00000111879.5">
    <property type="protein sequence ID" value="ENSMUSP00000107510.4"/>
    <property type="gene ID" value="ENSMUSG00000032500.11"/>
</dbReference>
<dbReference type="GeneID" id="245038"/>
<dbReference type="KEGG" id="mmu:245038"/>
<dbReference type="UCSC" id="uc009rvv.2">
    <property type="organism name" value="mouse"/>
</dbReference>
<dbReference type="AGR" id="MGI:3039580"/>
<dbReference type="CTD" id="85443"/>
<dbReference type="MGI" id="MGI:3039580">
    <property type="gene designation" value="Dclk3"/>
</dbReference>
<dbReference type="VEuPathDB" id="HostDB:ENSMUSG00000032500"/>
<dbReference type="eggNOG" id="KOG0032">
    <property type="taxonomic scope" value="Eukaryota"/>
</dbReference>
<dbReference type="GeneTree" id="ENSGT00940000159476"/>
<dbReference type="HOGENOM" id="CLU_000288_94_2_1"/>
<dbReference type="InParanoid" id="Q8BWQ5"/>
<dbReference type="OMA" id="VRAQKKW"/>
<dbReference type="OrthoDB" id="1738954at2759"/>
<dbReference type="PhylomeDB" id="Q8BWQ5"/>
<dbReference type="TreeFam" id="TF318770"/>
<dbReference type="BioGRID-ORCS" id="245038">
    <property type="hits" value="3 hits in 80 CRISPR screens"/>
</dbReference>
<dbReference type="PRO" id="PR:Q8BWQ5"/>
<dbReference type="Proteomes" id="UP000000589">
    <property type="component" value="Chromosome 9"/>
</dbReference>
<dbReference type="RNAct" id="Q8BWQ5">
    <property type="molecule type" value="protein"/>
</dbReference>
<dbReference type="Bgee" id="ENSMUSG00000032500">
    <property type="expression patterns" value="Expressed in olfactory tubercle and 114 other cell types or tissues"/>
</dbReference>
<dbReference type="GO" id="GO:0005737">
    <property type="term" value="C:cytoplasm"/>
    <property type="evidence" value="ECO:0000314"/>
    <property type="project" value="MGI"/>
</dbReference>
<dbReference type="GO" id="GO:0005634">
    <property type="term" value="C:nucleus"/>
    <property type="evidence" value="ECO:0000314"/>
    <property type="project" value="MGI"/>
</dbReference>
<dbReference type="GO" id="GO:0005524">
    <property type="term" value="F:ATP binding"/>
    <property type="evidence" value="ECO:0007669"/>
    <property type="project" value="UniProtKB-KW"/>
</dbReference>
<dbReference type="GO" id="GO:0004672">
    <property type="term" value="F:protein kinase activity"/>
    <property type="evidence" value="ECO:0000314"/>
    <property type="project" value="MGI"/>
</dbReference>
<dbReference type="GO" id="GO:0106310">
    <property type="term" value="F:protein serine kinase activity"/>
    <property type="evidence" value="ECO:0007669"/>
    <property type="project" value="RHEA"/>
</dbReference>
<dbReference type="GO" id="GO:0004674">
    <property type="term" value="F:protein serine/threonine kinase activity"/>
    <property type="evidence" value="ECO:0007669"/>
    <property type="project" value="UniProtKB-KW"/>
</dbReference>
<dbReference type="GO" id="GO:0035556">
    <property type="term" value="P:intracellular signal transduction"/>
    <property type="evidence" value="ECO:0007669"/>
    <property type="project" value="InterPro"/>
</dbReference>
<dbReference type="GO" id="GO:1900181">
    <property type="term" value="P:negative regulation of protein localization to nucleus"/>
    <property type="evidence" value="ECO:0000314"/>
    <property type="project" value="MGI"/>
</dbReference>
<dbReference type="GO" id="GO:0034504">
    <property type="term" value="P:protein localization to nucleus"/>
    <property type="evidence" value="ECO:0000314"/>
    <property type="project" value="MGI"/>
</dbReference>
<dbReference type="CDD" id="cd16111">
    <property type="entry name" value="DCX_DCLK3"/>
    <property type="match status" value="1"/>
</dbReference>
<dbReference type="FunFam" id="3.30.200.20:FF:000042">
    <property type="entry name" value="Aurora kinase A"/>
    <property type="match status" value="1"/>
</dbReference>
<dbReference type="FunFam" id="3.10.20.230:FF:000013">
    <property type="entry name" value="Serine/threonine-protein kinase DCLK3"/>
    <property type="match status" value="1"/>
</dbReference>
<dbReference type="FunFam" id="1.10.510.10:FF:000866">
    <property type="entry name" value="Serine/threonine-protein kinase GA29083"/>
    <property type="match status" value="1"/>
</dbReference>
<dbReference type="Gene3D" id="3.10.20.230">
    <property type="entry name" value="Doublecortin domain"/>
    <property type="match status" value="1"/>
</dbReference>
<dbReference type="Gene3D" id="1.10.510.10">
    <property type="entry name" value="Transferase(Phosphotransferase) domain 1"/>
    <property type="match status" value="1"/>
</dbReference>
<dbReference type="InterPro" id="IPR003533">
    <property type="entry name" value="Doublecortin_dom"/>
</dbReference>
<dbReference type="InterPro" id="IPR036572">
    <property type="entry name" value="Doublecortin_dom_sf"/>
</dbReference>
<dbReference type="InterPro" id="IPR011009">
    <property type="entry name" value="Kinase-like_dom_sf"/>
</dbReference>
<dbReference type="InterPro" id="IPR000719">
    <property type="entry name" value="Prot_kinase_dom"/>
</dbReference>
<dbReference type="InterPro" id="IPR017441">
    <property type="entry name" value="Protein_kinase_ATP_BS"/>
</dbReference>
<dbReference type="InterPro" id="IPR008271">
    <property type="entry name" value="Ser/Thr_kinase_AS"/>
</dbReference>
<dbReference type="PANTHER" id="PTHR24347">
    <property type="entry name" value="SERINE/THREONINE-PROTEIN KINASE"/>
    <property type="match status" value="1"/>
</dbReference>
<dbReference type="Pfam" id="PF03607">
    <property type="entry name" value="DCX"/>
    <property type="match status" value="1"/>
</dbReference>
<dbReference type="Pfam" id="PF00069">
    <property type="entry name" value="Pkinase"/>
    <property type="match status" value="1"/>
</dbReference>
<dbReference type="SMART" id="SM00537">
    <property type="entry name" value="DCX"/>
    <property type="match status" value="1"/>
</dbReference>
<dbReference type="SMART" id="SM00220">
    <property type="entry name" value="S_TKc"/>
    <property type="match status" value="1"/>
</dbReference>
<dbReference type="SUPFAM" id="SSF89837">
    <property type="entry name" value="Doublecortin (DC)"/>
    <property type="match status" value="1"/>
</dbReference>
<dbReference type="SUPFAM" id="SSF56112">
    <property type="entry name" value="Protein kinase-like (PK-like)"/>
    <property type="match status" value="1"/>
</dbReference>
<dbReference type="PROSITE" id="PS50309">
    <property type="entry name" value="DC"/>
    <property type="match status" value="1"/>
</dbReference>
<dbReference type="PROSITE" id="PS00107">
    <property type="entry name" value="PROTEIN_KINASE_ATP"/>
    <property type="match status" value="1"/>
</dbReference>
<dbReference type="PROSITE" id="PS50011">
    <property type="entry name" value="PROTEIN_KINASE_DOM"/>
    <property type="match status" value="1"/>
</dbReference>
<dbReference type="PROSITE" id="PS00108">
    <property type="entry name" value="PROTEIN_KINASE_ST"/>
    <property type="match status" value="1"/>
</dbReference>
<comment type="catalytic activity">
    <reaction>
        <text>L-seryl-[protein] + ATP = O-phospho-L-seryl-[protein] + ADP + H(+)</text>
        <dbReference type="Rhea" id="RHEA:17989"/>
        <dbReference type="Rhea" id="RHEA-COMP:9863"/>
        <dbReference type="Rhea" id="RHEA-COMP:11604"/>
        <dbReference type="ChEBI" id="CHEBI:15378"/>
        <dbReference type="ChEBI" id="CHEBI:29999"/>
        <dbReference type="ChEBI" id="CHEBI:30616"/>
        <dbReference type="ChEBI" id="CHEBI:83421"/>
        <dbReference type="ChEBI" id="CHEBI:456216"/>
        <dbReference type="EC" id="2.7.11.1"/>
    </reaction>
</comment>
<comment type="catalytic activity">
    <reaction>
        <text>L-threonyl-[protein] + ATP = O-phospho-L-threonyl-[protein] + ADP + H(+)</text>
        <dbReference type="Rhea" id="RHEA:46608"/>
        <dbReference type="Rhea" id="RHEA-COMP:11060"/>
        <dbReference type="Rhea" id="RHEA-COMP:11605"/>
        <dbReference type="ChEBI" id="CHEBI:15378"/>
        <dbReference type="ChEBI" id="CHEBI:30013"/>
        <dbReference type="ChEBI" id="CHEBI:30616"/>
        <dbReference type="ChEBI" id="CHEBI:61977"/>
        <dbReference type="ChEBI" id="CHEBI:456216"/>
        <dbReference type="EC" id="2.7.11.1"/>
    </reaction>
</comment>
<comment type="interaction">
    <interactant intactId="EBI-16518538">
        <id>Q8BWQ5</id>
    </interactant>
    <interactant intactId="EBI-473249">
        <id>O75528</id>
        <label>TADA3</label>
    </interactant>
    <organismsDiffer>true</organismsDiffer>
    <experiments>2</experiments>
</comment>
<comment type="subcellular location">
    <subcellularLocation>
        <location evidence="5">Cytoplasm</location>
    </subcellularLocation>
    <subcellularLocation>
        <location evidence="5">Nucleus</location>
    </subcellularLocation>
</comment>
<comment type="tissue specificity">
    <text evidence="5">Highly expressed in brain and to a lower extent in liver and kidney.</text>
</comment>
<comment type="similarity">
    <text evidence="6">Belongs to the protein kinase superfamily. CAMK Ser/Thr protein kinase family. CaMK subfamily.</text>
</comment>
<comment type="sequence caution" evidence="6">
    <conflict type="erroneous initiation">
        <sequence resource="EMBL-CDS" id="AAH56929"/>
    </conflict>
    <text>Truncated N-terminus.</text>
</comment>
<comment type="sequence caution" evidence="6">
    <conflict type="frameshift">
        <sequence resource="EMBL-CDS" id="BAC34182"/>
    </conflict>
</comment>
<keyword id="KW-0067">ATP-binding</keyword>
<keyword id="KW-0963">Cytoplasm</keyword>
<keyword id="KW-0418">Kinase</keyword>
<keyword id="KW-0547">Nucleotide-binding</keyword>
<keyword id="KW-0539">Nucleus</keyword>
<keyword id="KW-1185">Reference proteome</keyword>
<keyword id="KW-0723">Serine/threonine-protein kinase</keyword>
<keyword id="KW-0808">Transferase</keyword>
<name>DCLK3_MOUSE</name>
<sequence>MPAAPVLRPPPPPATPAPPAPSRPAPPIPGHRGPCDHSLKCLSSKISERKLPGPWLPAGRGPLEKPVLGPRGAVMPLFSPQSSLHSVRAEHSPLKPRVVTVVKLGGQPLRKATLLLNRRSVQTFEQLLSDISEALGFPRWKNDRVRKLFTLKGREVKSVSDFFREGDAFIAMGKEPLTLKSIQLAMEELYPKNRALALAPHSRVPSPRLRSRLPSKLLKGSHRCGEAGSYSAEMESKAVSRHQGKTSTVLAPEDKARAQKWVRGKQESEPGGPPSPGAATQEETHASGEKHLGVEIEKTSGEIVRCEKCKRERELQLGLQREPCPLGTSELDLGRAQKRDSEKLVRTKSCRRPSEAKSTDGEEGWKGDSHRGSPRDPPQELRRPNSNSDKKEIRGSESQDSHPQGAPKAQKDLVEGPPAVEEGPIDMRREDRHTCRSKHAAWLRREQQAEPPQLPRTRGEEKQAEHEKKPGGLGERRAPEKESKRKLEEKRPERPSGRKPRPKGIISADVEKHYDIGGVIGDGNFATVKECRHRETKQAYAMKMIDKSQLKGKEDIVDSEILIIQSLSHPNIVKLHEVYETEAEIYLIMEYVQGGDLFDAIVENVKFPEPEAAVMITDLCKALVHMHDKNIVHRDVKPENLLVQRNEDKSITLKLADFGLAKYVVRPIFTVCGTPTYVAPEILSEKGYGLEVDMWAAGVILYILLCGFPPFRSPERDQDELFNIIQVGQFEFLSPYWDNISDAAKDLVRNLLEVDPKKRYTAEQVLQHPWIEMVGHTNTGNSQKEESPNS</sequence>
<proteinExistence type="evidence at protein level"/>
<evidence type="ECO:0000255" key="1">
    <source>
        <dbReference type="PROSITE-ProRule" id="PRU00072"/>
    </source>
</evidence>
<evidence type="ECO:0000255" key="2">
    <source>
        <dbReference type="PROSITE-ProRule" id="PRU00159"/>
    </source>
</evidence>
<evidence type="ECO:0000255" key="3">
    <source>
        <dbReference type="PROSITE-ProRule" id="PRU10027"/>
    </source>
</evidence>
<evidence type="ECO:0000256" key="4">
    <source>
        <dbReference type="SAM" id="MobiDB-lite"/>
    </source>
</evidence>
<evidence type="ECO:0000269" key="5">
    <source>
    </source>
</evidence>
<evidence type="ECO:0000305" key="6"/>
<feature type="chain" id="PRO_0000252255" description="Serine/threonine-protein kinase DCLK3">
    <location>
        <begin position="1"/>
        <end position="790"/>
    </location>
</feature>
<feature type="domain" description="Doublecortin" evidence="1">
    <location>
        <begin position="97"/>
        <end position="183"/>
    </location>
</feature>
<feature type="domain" description="Protein kinase" evidence="2">
    <location>
        <begin position="514"/>
        <end position="771"/>
    </location>
</feature>
<feature type="region of interest" description="Disordered" evidence="4">
    <location>
        <begin position="1"/>
        <end position="37"/>
    </location>
</feature>
<feature type="region of interest" description="Disordered" evidence="4">
    <location>
        <begin position="201"/>
        <end position="290"/>
    </location>
</feature>
<feature type="region of interest" description="Disordered" evidence="4">
    <location>
        <begin position="315"/>
        <end position="506"/>
    </location>
</feature>
<feature type="compositionally biased region" description="Pro residues" evidence="4">
    <location>
        <begin position="7"/>
        <end position="29"/>
    </location>
</feature>
<feature type="compositionally biased region" description="Low complexity" evidence="4">
    <location>
        <begin position="201"/>
        <end position="218"/>
    </location>
</feature>
<feature type="compositionally biased region" description="Basic and acidic residues" evidence="4">
    <location>
        <begin position="332"/>
        <end position="345"/>
    </location>
</feature>
<feature type="compositionally biased region" description="Basic and acidic residues" evidence="4">
    <location>
        <begin position="352"/>
        <end position="400"/>
    </location>
</feature>
<feature type="compositionally biased region" description="Basic and acidic residues" evidence="4">
    <location>
        <begin position="425"/>
        <end position="434"/>
    </location>
</feature>
<feature type="compositionally biased region" description="Basic and acidic residues" evidence="4">
    <location>
        <begin position="457"/>
        <end position="496"/>
    </location>
</feature>
<feature type="active site" description="Proton acceptor" evidence="2 3">
    <location>
        <position position="635"/>
    </location>
</feature>
<feature type="binding site" evidence="2">
    <location>
        <begin position="520"/>
        <end position="528"/>
    </location>
    <ligand>
        <name>ATP</name>
        <dbReference type="ChEBI" id="CHEBI:30616"/>
    </ligand>
</feature>
<feature type="binding site" evidence="2">
    <location>
        <position position="543"/>
    </location>
    <ligand>
        <name>ATP</name>
        <dbReference type="ChEBI" id="CHEBI:30616"/>
    </ligand>
</feature>
<accession>Q8BWQ5</accession>
<accession>Q1A748</accession>
<gene>
    <name type="primary">Dclk3</name>
    <name type="synonym">Dcamkl3</name>
</gene>
<protein>
    <recommendedName>
        <fullName>Serine/threonine-protein kinase DCLK3</fullName>
        <ecNumber>2.7.11.1</ecNumber>
    </recommendedName>
    <alternativeName>
        <fullName>CLICK-I and II-related</fullName>
        <shortName>CLr</shortName>
    </alternativeName>
    <alternativeName>
        <fullName>Doublecortin-like and CAM kinase-like 3</fullName>
    </alternativeName>
    <alternativeName>
        <fullName>Doublecortin-like kinase 3</fullName>
    </alternativeName>
</protein>
<organism>
    <name type="scientific">Mus musculus</name>
    <name type="common">Mouse</name>
    <dbReference type="NCBI Taxonomy" id="10090"/>
    <lineage>
        <taxon>Eukaryota</taxon>
        <taxon>Metazoa</taxon>
        <taxon>Chordata</taxon>
        <taxon>Craniata</taxon>
        <taxon>Vertebrata</taxon>
        <taxon>Euteleostomi</taxon>
        <taxon>Mammalia</taxon>
        <taxon>Eutheria</taxon>
        <taxon>Euarchontoglires</taxon>
        <taxon>Glires</taxon>
        <taxon>Rodentia</taxon>
        <taxon>Myomorpha</taxon>
        <taxon>Muroidea</taxon>
        <taxon>Muridae</taxon>
        <taxon>Murinae</taxon>
        <taxon>Mus</taxon>
        <taxon>Mus</taxon>
    </lineage>
</organism>